<dbReference type="EC" id="4.2.3.-" evidence="3"/>
<dbReference type="EMBL" id="MG262465">
    <property type="protein sequence ID" value="AXN72973.1"/>
    <property type="molecule type" value="mRNA"/>
</dbReference>
<dbReference type="EMBL" id="GL871369">
    <property type="protein sequence ID" value="EGC29992.1"/>
    <property type="molecule type" value="Genomic_DNA"/>
</dbReference>
<dbReference type="RefSeq" id="XP_003293476.1">
    <property type="nucleotide sequence ID" value="XM_003293428.1"/>
</dbReference>
<dbReference type="SMR" id="F1A1D4"/>
<dbReference type="EnsemblProtists" id="EGC29992">
    <property type="protein sequence ID" value="EGC29992"/>
    <property type="gene ID" value="DICPUDRAFT_42082"/>
</dbReference>
<dbReference type="GeneID" id="10511399"/>
<dbReference type="KEGG" id="dpp:DICPUDRAFT_42082"/>
<dbReference type="VEuPathDB" id="AmoebaDB:DICPUDRAFT_42082"/>
<dbReference type="InParanoid" id="F1A1D4"/>
<dbReference type="OrthoDB" id="2861623at2759"/>
<dbReference type="Proteomes" id="UP000001064">
    <property type="component" value="Unassembled WGS sequence"/>
</dbReference>
<dbReference type="GO" id="GO:0046872">
    <property type="term" value="F:metal ion binding"/>
    <property type="evidence" value="ECO:0007669"/>
    <property type="project" value="UniProtKB-KW"/>
</dbReference>
<dbReference type="GO" id="GO:0010333">
    <property type="term" value="F:terpene synthase activity"/>
    <property type="evidence" value="ECO:0000318"/>
    <property type="project" value="GO_Central"/>
</dbReference>
<dbReference type="GO" id="GO:0046246">
    <property type="term" value="P:terpene biosynthetic process"/>
    <property type="evidence" value="ECO:0007669"/>
    <property type="project" value="UniProtKB-ARBA"/>
</dbReference>
<dbReference type="Gene3D" id="1.10.600.10">
    <property type="entry name" value="Farnesyl Diphosphate Synthase"/>
    <property type="match status" value="1"/>
</dbReference>
<dbReference type="InterPro" id="IPR008949">
    <property type="entry name" value="Isoprenoid_synthase_dom_sf"/>
</dbReference>
<dbReference type="InterPro" id="IPR034686">
    <property type="entry name" value="Terpene_cyclase-like_2"/>
</dbReference>
<dbReference type="PANTHER" id="PTHR35201">
    <property type="entry name" value="TERPENE SYNTHASE"/>
    <property type="match status" value="1"/>
</dbReference>
<dbReference type="PANTHER" id="PTHR35201:SF2">
    <property type="entry name" value="TERPENE SYNTHASE 1-RELATED"/>
    <property type="match status" value="1"/>
</dbReference>
<dbReference type="Pfam" id="PF19086">
    <property type="entry name" value="Terpene_syn_C_2"/>
    <property type="match status" value="1"/>
</dbReference>
<dbReference type="SUPFAM" id="SSF48576">
    <property type="entry name" value="Terpenoid synthases"/>
    <property type="match status" value="1"/>
</dbReference>
<comment type="function">
    <text evidence="3">Terpene synthase that converts its substrate farnesyl diphosphate (FPP) into the sesquiterpenes bicycloelemene, beta-elemene and 2 yet unidentified sesquiterpenes.</text>
</comment>
<comment type="catalytic activity">
    <reaction evidence="3">
        <text>(2E,6E)-farnesyl diphosphate = (1S,2S,4R)-beta-elemene + diphosphate</text>
        <dbReference type="Rhea" id="RHEA:68712"/>
        <dbReference type="ChEBI" id="CHEBI:33019"/>
        <dbReference type="ChEBI" id="CHEBI:62855"/>
        <dbReference type="ChEBI" id="CHEBI:175763"/>
    </reaction>
    <physiologicalReaction direction="left-to-right" evidence="3">
        <dbReference type="Rhea" id="RHEA:68713"/>
    </physiologicalReaction>
</comment>
<comment type="domain">
    <text evidence="2">Contains several highly conserved motifs that are important for catalytic activity including the aspartate-rich 'DDxx(x)D/E' motif and the 'NDxxSxxxD/E' motif, both of which are involved in complexing metal ions to coordinate the binding of the isoprenyl diphosphate substrate in the active site.</text>
</comment>
<comment type="similarity">
    <text evidence="5">Belongs to the terpene synthase family.</text>
</comment>
<evidence type="ECO:0000250" key="1">
    <source>
        <dbReference type="UniProtKB" id="Q54BE5"/>
    </source>
</evidence>
<evidence type="ECO:0000250" key="2">
    <source>
        <dbReference type="UniProtKB" id="Q55E23"/>
    </source>
</evidence>
<evidence type="ECO:0000269" key="3">
    <source>
    </source>
</evidence>
<evidence type="ECO:0000303" key="4">
    <source>
    </source>
</evidence>
<evidence type="ECO:0000305" key="5"/>
<reference key="1">
    <citation type="journal article" date="2018" name="Sci. Rep.">
        <title>Diversity and Functional Evolution of Terpene Synthases in Dictyostelid Social Amoebae.</title>
        <authorList>
            <person name="Chen X."/>
            <person name="Kollner T.G."/>
            <person name="Shaulsky G."/>
            <person name="Jia Q."/>
            <person name="Dickschat J.S."/>
            <person name="Gershenzon J."/>
            <person name="Chen F."/>
        </authorList>
    </citation>
    <scope>NUCLEOTIDE SEQUENCE [MRNA]</scope>
    <scope>FUNCTION</scope>
    <scope>CATALYTIC ACTIVITY</scope>
    <source>
        <strain>AX1</strain>
    </source>
</reference>
<reference key="2">
    <citation type="journal article" date="2011" name="Genome Biol.">
        <title>Comparative genomics of the social amoebae Dictyostelium discoideum and Dictyostelium purpureum.</title>
        <authorList>
            <consortium name="US DOE Joint Genome Institute (JGI-PGF)"/>
            <person name="Sucgang R."/>
            <person name="Kuo A."/>
            <person name="Tian X."/>
            <person name="Salerno W."/>
            <person name="Parikh A."/>
            <person name="Feasley C.L."/>
            <person name="Dalin E."/>
            <person name="Tu H."/>
            <person name="Huang E."/>
            <person name="Barry K."/>
            <person name="Lindquist E."/>
            <person name="Shapiro H."/>
            <person name="Bruce D."/>
            <person name="Schmutz J."/>
            <person name="Salamov A."/>
            <person name="Fey P."/>
            <person name="Gaudet P."/>
            <person name="Anjard C."/>
            <person name="Babu M.M."/>
            <person name="Basu S."/>
            <person name="Bushmanova Y."/>
            <person name="van der Wel H."/>
            <person name="Katoh-Kurasawa M."/>
            <person name="Dinh C."/>
            <person name="Coutinho P.M."/>
            <person name="Saito T."/>
            <person name="Elias M."/>
            <person name="Schaap P."/>
            <person name="Kay R.R."/>
            <person name="Henrissat B."/>
            <person name="Eichinger L."/>
            <person name="Rivero F."/>
            <person name="Putnam N.H."/>
            <person name="West C.M."/>
            <person name="Loomis W.F."/>
            <person name="Chisholm R.L."/>
            <person name="Shaulsky G."/>
            <person name="Strassmann J.E."/>
            <person name="Queller D.C."/>
            <person name="Kuspa A."/>
            <person name="Grigoriev I.V."/>
        </authorList>
    </citation>
    <scope>NUCLEOTIDE SEQUENCE [LARGE SCALE GENOMIC DNA]</scope>
    <source>
        <strain>QSDP1</strain>
    </source>
</reference>
<proteinExistence type="evidence at protein level"/>
<protein>
    <recommendedName>
        <fullName evidence="4">Terpene synthase 4</fullName>
        <ecNumber evidence="3">4.2.3.-</ecNumber>
    </recommendedName>
</protein>
<feature type="chain" id="PRO_0000457021" description="Terpene synthase 4">
    <location>
        <begin position="1"/>
        <end position="366"/>
    </location>
</feature>
<feature type="short sequence motif" description="DDxx(x)D/E motif" evidence="1">
    <location>
        <begin position="91"/>
        <end position="96"/>
    </location>
</feature>
<feature type="short sequence motif" description="NDxxSxxxD/E motif" evidence="1">
    <location>
        <begin position="241"/>
        <end position="249"/>
    </location>
</feature>
<gene>
    <name evidence="4" type="primary">TPS4</name>
    <name type="ORF">DICPUDRAFT_42082</name>
</gene>
<sequence length="366" mass="42911">MNSLANNGKLYLSLKKLNFPKEWSYPVNPNTSYIIDTFKEAVKCGIFLESNKKHFEYSYSILTVIGWFFPRYNYEQLMIASSVMQWIFVLDDFLERDHIDDEKQQYCVNKCEDILIQGRKSEYISNIADADLAPLDKYTLLLRDRLSKSTKDRVETFNIFIHYLREWFFSVIPLKKSKGESKSDSVHYDVYTFIRTVNVGLYFVIAINNVAVDLKIDGSFWMNPIWSRMTRNASRLFTIVNDCVSYAKEIDQECAGENCLYILQIKSNLPLQTVYNHLVDEFDQIVAKVQKDEILLLESFNYLPNEKIDGIKYLILSLKELLVGNYKWSLVSPRYIHKDSPFIETSRSDSSTIPYETILTPDIFWI</sequence>
<keyword id="KW-0456">Lyase</keyword>
<keyword id="KW-0479">Metal-binding</keyword>
<keyword id="KW-1185">Reference proteome</keyword>
<organism>
    <name type="scientific">Dictyostelium purpureum</name>
    <name type="common">Slime mold</name>
    <dbReference type="NCBI Taxonomy" id="5786"/>
    <lineage>
        <taxon>Eukaryota</taxon>
        <taxon>Amoebozoa</taxon>
        <taxon>Evosea</taxon>
        <taxon>Eumycetozoa</taxon>
        <taxon>Dictyostelia</taxon>
        <taxon>Dictyosteliales</taxon>
        <taxon>Dictyosteliaceae</taxon>
        <taxon>Dictyostelium</taxon>
    </lineage>
</organism>
<name>TPS4_DICPU</name>
<accession>F1A1D4</accession>